<protein>
    <recommendedName>
        <fullName evidence="1">Glucosamine-6-phosphate deaminase</fullName>
        <ecNumber evidence="1">3.5.99.6</ecNumber>
    </recommendedName>
    <alternativeName>
        <fullName evidence="1">GlcN6P deaminase</fullName>
        <shortName evidence="1">GNPDA</shortName>
    </alternativeName>
    <alternativeName>
        <fullName evidence="1">Glucosamine-6-phosphate isomerase</fullName>
    </alternativeName>
</protein>
<name>NAGB_STRU0</name>
<dbReference type="EC" id="3.5.99.6" evidence="1"/>
<dbReference type="EMBL" id="AM946015">
    <property type="protein sequence ID" value="CAR42707.1"/>
    <property type="molecule type" value="Genomic_DNA"/>
</dbReference>
<dbReference type="RefSeq" id="WP_012658714.1">
    <property type="nucleotide sequence ID" value="NC_012004.1"/>
</dbReference>
<dbReference type="SMR" id="B9DWG4"/>
<dbReference type="STRING" id="218495.SUB1239"/>
<dbReference type="KEGG" id="sub:SUB1239"/>
<dbReference type="eggNOG" id="COG0363">
    <property type="taxonomic scope" value="Bacteria"/>
</dbReference>
<dbReference type="HOGENOM" id="CLU_049611_1_0_9"/>
<dbReference type="OrthoDB" id="9791139at2"/>
<dbReference type="UniPathway" id="UPA00629">
    <property type="reaction ID" value="UER00684"/>
</dbReference>
<dbReference type="Proteomes" id="UP000000449">
    <property type="component" value="Chromosome"/>
</dbReference>
<dbReference type="GO" id="GO:0005737">
    <property type="term" value="C:cytoplasm"/>
    <property type="evidence" value="ECO:0007669"/>
    <property type="project" value="TreeGrafter"/>
</dbReference>
<dbReference type="GO" id="GO:0004342">
    <property type="term" value="F:glucosamine-6-phosphate deaminase activity"/>
    <property type="evidence" value="ECO:0007669"/>
    <property type="project" value="UniProtKB-UniRule"/>
</dbReference>
<dbReference type="GO" id="GO:0042802">
    <property type="term" value="F:identical protein binding"/>
    <property type="evidence" value="ECO:0007669"/>
    <property type="project" value="TreeGrafter"/>
</dbReference>
<dbReference type="GO" id="GO:0005975">
    <property type="term" value="P:carbohydrate metabolic process"/>
    <property type="evidence" value="ECO:0007669"/>
    <property type="project" value="InterPro"/>
</dbReference>
<dbReference type="GO" id="GO:0006043">
    <property type="term" value="P:glucosamine catabolic process"/>
    <property type="evidence" value="ECO:0007669"/>
    <property type="project" value="TreeGrafter"/>
</dbReference>
<dbReference type="GO" id="GO:0006046">
    <property type="term" value="P:N-acetylglucosamine catabolic process"/>
    <property type="evidence" value="ECO:0007669"/>
    <property type="project" value="TreeGrafter"/>
</dbReference>
<dbReference type="GO" id="GO:0019262">
    <property type="term" value="P:N-acetylneuraminate catabolic process"/>
    <property type="evidence" value="ECO:0007669"/>
    <property type="project" value="UniProtKB-UniRule"/>
</dbReference>
<dbReference type="CDD" id="cd01399">
    <property type="entry name" value="GlcN6P_deaminase"/>
    <property type="match status" value="1"/>
</dbReference>
<dbReference type="FunFam" id="3.40.50.1360:FF:000003">
    <property type="entry name" value="Glucosamine-6-phosphate deaminase"/>
    <property type="match status" value="1"/>
</dbReference>
<dbReference type="Gene3D" id="3.40.50.1360">
    <property type="match status" value="1"/>
</dbReference>
<dbReference type="HAMAP" id="MF_01241">
    <property type="entry name" value="GlcN6P_deamin"/>
    <property type="match status" value="1"/>
</dbReference>
<dbReference type="InterPro" id="IPR006148">
    <property type="entry name" value="Glc/Gal-6P_isomerase"/>
</dbReference>
<dbReference type="InterPro" id="IPR004547">
    <property type="entry name" value="Glucosamine6P_isomerase"/>
</dbReference>
<dbReference type="InterPro" id="IPR018321">
    <property type="entry name" value="Glucosamine6P_isomerase_CS"/>
</dbReference>
<dbReference type="InterPro" id="IPR037171">
    <property type="entry name" value="NagB/RpiA_transferase-like"/>
</dbReference>
<dbReference type="NCBIfam" id="TIGR00502">
    <property type="entry name" value="nagB"/>
    <property type="match status" value="1"/>
</dbReference>
<dbReference type="PANTHER" id="PTHR11280">
    <property type="entry name" value="GLUCOSAMINE-6-PHOSPHATE ISOMERASE"/>
    <property type="match status" value="1"/>
</dbReference>
<dbReference type="PANTHER" id="PTHR11280:SF5">
    <property type="entry name" value="GLUCOSAMINE-6-PHOSPHATE ISOMERASE"/>
    <property type="match status" value="1"/>
</dbReference>
<dbReference type="Pfam" id="PF01182">
    <property type="entry name" value="Glucosamine_iso"/>
    <property type="match status" value="1"/>
</dbReference>
<dbReference type="SUPFAM" id="SSF100950">
    <property type="entry name" value="NagB/RpiA/CoA transferase-like"/>
    <property type="match status" value="1"/>
</dbReference>
<dbReference type="PROSITE" id="PS01161">
    <property type="entry name" value="GLC_GALNAC_ISOMERASE"/>
    <property type="match status" value="1"/>
</dbReference>
<organism>
    <name type="scientific">Streptococcus uberis (strain ATCC BAA-854 / 0140J)</name>
    <dbReference type="NCBI Taxonomy" id="218495"/>
    <lineage>
        <taxon>Bacteria</taxon>
        <taxon>Bacillati</taxon>
        <taxon>Bacillota</taxon>
        <taxon>Bacilli</taxon>
        <taxon>Lactobacillales</taxon>
        <taxon>Streptococcaceae</taxon>
        <taxon>Streptococcus</taxon>
    </lineage>
</organism>
<sequence length="234" mass="25954">MKVIRVKNQEEGGQVAFSLLKESLAHGAKTLGLATGSTPLTFYKEIVKSDLSFSDVTSINLDEYVGLPVEHDQSYDYFMRENLFNHKPFKENYLPNGLAKDLSVEVSRYDNLIAEHPIDFQILGIGRNGHIGFNEPGTPFDIRTHVVDLEESTIEANSRFFASKEDVPKQAVSMGIASIMESKMIVLMAFGKEKAYAVKEMITGPITESLPASVLQNHDNVIVIVDEEAASELD</sequence>
<feature type="chain" id="PRO_1000165028" description="Glucosamine-6-phosphate deaminase">
    <location>
        <begin position="1"/>
        <end position="234"/>
    </location>
</feature>
<feature type="active site" description="Proton acceptor; for enolization step" evidence="1">
    <location>
        <position position="62"/>
    </location>
</feature>
<feature type="active site" description="For ring-opening step" evidence="1">
    <location>
        <position position="128"/>
    </location>
</feature>
<feature type="active site" description="Proton acceptor; for ring-opening step" evidence="1">
    <location>
        <position position="130"/>
    </location>
</feature>
<feature type="active site" description="For ring-opening step" evidence="1">
    <location>
        <position position="135"/>
    </location>
</feature>
<accession>B9DWG4</accession>
<keyword id="KW-0119">Carbohydrate metabolism</keyword>
<keyword id="KW-0378">Hydrolase</keyword>
<keyword id="KW-1185">Reference proteome</keyword>
<comment type="function">
    <text evidence="1">Catalyzes the reversible isomerization-deamination of glucosamine 6-phosphate (GlcN6P) to form fructose 6-phosphate (Fru6P) and ammonium ion.</text>
</comment>
<comment type="catalytic activity">
    <reaction evidence="1">
        <text>alpha-D-glucosamine 6-phosphate + H2O = beta-D-fructose 6-phosphate + NH4(+)</text>
        <dbReference type="Rhea" id="RHEA:12172"/>
        <dbReference type="ChEBI" id="CHEBI:15377"/>
        <dbReference type="ChEBI" id="CHEBI:28938"/>
        <dbReference type="ChEBI" id="CHEBI:57634"/>
        <dbReference type="ChEBI" id="CHEBI:75989"/>
        <dbReference type="EC" id="3.5.99.6"/>
    </reaction>
</comment>
<comment type="pathway">
    <text evidence="1">Amino-sugar metabolism; N-acetylneuraminate degradation; D-fructose 6-phosphate from N-acetylneuraminate: step 5/5.</text>
</comment>
<comment type="similarity">
    <text evidence="1">Belongs to the glucosamine/galactosamine-6-phosphate isomerase family. NagB subfamily.</text>
</comment>
<gene>
    <name evidence="1" type="primary">nagB</name>
    <name type="ordered locus">SUB1239</name>
</gene>
<proteinExistence type="inferred from homology"/>
<reference key="1">
    <citation type="journal article" date="2009" name="BMC Genomics">
        <title>Evidence for niche adaptation in the genome of the bovine pathogen Streptococcus uberis.</title>
        <authorList>
            <person name="Ward P.N."/>
            <person name="Holden M.T.G."/>
            <person name="Leigh J.A."/>
            <person name="Lennard N."/>
            <person name="Bignell A."/>
            <person name="Barron A."/>
            <person name="Clark L."/>
            <person name="Quail M.A."/>
            <person name="Woodward J."/>
            <person name="Barrell B.G."/>
            <person name="Egan S.A."/>
            <person name="Field T.R."/>
            <person name="Maskell D."/>
            <person name="Kehoe M."/>
            <person name="Dowson C.G."/>
            <person name="Chanter N."/>
            <person name="Whatmore A.M."/>
            <person name="Bentley S.D."/>
            <person name="Parkhill J."/>
        </authorList>
    </citation>
    <scope>NUCLEOTIDE SEQUENCE [LARGE SCALE GENOMIC DNA]</scope>
    <source>
        <strain>ATCC BAA-854 / 0140J</strain>
    </source>
</reference>
<evidence type="ECO:0000255" key="1">
    <source>
        <dbReference type="HAMAP-Rule" id="MF_01241"/>
    </source>
</evidence>